<gene>
    <name evidence="1" type="primary">trpC</name>
    <name type="ordered locus">Caul_2778</name>
</gene>
<feature type="chain" id="PRO_1000076416" description="Indole-3-glycerol phosphate synthase">
    <location>
        <begin position="1"/>
        <end position="262"/>
    </location>
</feature>
<proteinExistence type="inferred from homology"/>
<accession>B0SYZ4</accession>
<name>TRPC_CAUSK</name>
<reference key="1">
    <citation type="submission" date="2008-01" db="EMBL/GenBank/DDBJ databases">
        <title>Complete sequence of chromosome of Caulobacter sp. K31.</title>
        <authorList>
            <consortium name="US DOE Joint Genome Institute"/>
            <person name="Copeland A."/>
            <person name="Lucas S."/>
            <person name="Lapidus A."/>
            <person name="Barry K."/>
            <person name="Glavina del Rio T."/>
            <person name="Dalin E."/>
            <person name="Tice H."/>
            <person name="Pitluck S."/>
            <person name="Bruce D."/>
            <person name="Goodwin L."/>
            <person name="Thompson L.S."/>
            <person name="Brettin T."/>
            <person name="Detter J.C."/>
            <person name="Han C."/>
            <person name="Schmutz J."/>
            <person name="Larimer F."/>
            <person name="Land M."/>
            <person name="Hauser L."/>
            <person name="Kyrpides N."/>
            <person name="Kim E."/>
            <person name="Stephens C."/>
            <person name="Richardson P."/>
        </authorList>
    </citation>
    <scope>NUCLEOTIDE SEQUENCE [LARGE SCALE GENOMIC DNA]</scope>
    <source>
        <strain>K31</strain>
    </source>
</reference>
<organism>
    <name type="scientific">Caulobacter sp. (strain K31)</name>
    <dbReference type="NCBI Taxonomy" id="366602"/>
    <lineage>
        <taxon>Bacteria</taxon>
        <taxon>Pseudomonadati</taxon>
        <taxon>Pseudomonadota</taxon>
        <taxon>Alphaproteobacteria</taxon>
        <taxon>Caulobacterales</taxon>
        <taxon>Caulobacteraceae</taxon>
        <taxon>Caulobacter</taxon>
    </lineage>
</organism>
<keyword id="KW-0028">Amino-acid biosynthesis</keyword>
<keyword id="KW-0057">Aromatic amino acid biosynthesis</keyword>
<keyword id="KW-0210">Decarboxylase</keyword>
<keyword id="KW-0456">Lyase</keyword>
<keyword id="KW-0822">Tryptophan biosynthesis</keyword>
<protein>
    <recommendedName>
        <fullName evidence="1">Indole-3-glycerol phosphate synthase</fullName>
        <shortName evidence="1">IGPS</shortName>
        <ecNumber evidence="1">4.1.1.48</ecNumber>
    </recommendedName>
</protein>
<evidence type="ECO:0000255" key="1">
    <source>
        <dbReference type="HAMAP-Rule" id="MF_00134"/>
    </source>
</evidence>
<sequence>MTDILAKIAAYKREDVADRKRRRSIAQLEAAAKAANSPRGFKAALEADHAPGKLALIAEIKKASPSKGLIRADFDPPALARAYAAGGASCLSVLTDGPSFQGADGYLIDVRAAVSLPCIRKDFLVDPWQVAESRALGADAILVILAMIDDAVAADLMSEAARLGMDALVEVHDEAEMERAGKLGSTLVGINNRDLKSFVVDLAVTERLAVQAPSDALLVTESGLFVAADVARMEAAGAKAMLVGESLMRQADVAAATRALLG</sequence>
<comment type="catalytic activity">
    <reaction evidence="1">
        <text>1-(2-carboxyphenylamino)-1-deoxy-D-ribulose 5-phosphate + H(+) = (1S,2R)-1-C-(indol-3-yl)glycerol 3-phosphate + CO2 + H2O</text>
        <dbReference type="Rhea" id="RHEA:23476"/>
        <dbReference type="ChEBI" id="CHEBI:15377"/>
        <dbReference type="ChEBI" id="CHEBI:15378"/>
        <dbReference type="ChEBI" id="CHEBI:16526"/>
        <dbReference type="ChEBI" id="CHEBI:58613"/>
        <dbReference type="ChEBI" id="CHEBI:58866"/>
        <dbReference type="EC" id="4.1.1.48"/>
    </reaction>
</comment>
<comment type="pathway">
    <text evidence="1">Amino-acid biosynthesis; L-tryptophan biosynthesis; L-tryptophan from chorismate: step 4/5.</text>
</comment>
<comment type="similarity">
    <text evidence="1">Belongs to the TrpC family.</text>
</comment>
<dbReference type="EC" id="4.1.1.48" evidence="1"/>
<dbReference type="EMBL" id="CP000927">
    <property type="protein sequence ID" value="ABZ71905.1"/>
    <property type="molecule type" value="Genomic_DNA"/>
</dbReference>
<dbReference type="SMR" id="B0SYZ4"/>
<dbReference type="STRING" id="366602.Caul_2778"/>
<dbReference type="KEGG" id="cak:Caul_2778"/>
<dbReference type="eggNOG" id="COG0134">
    <property type="taxonomic scope" value="Bacteria"/>
</dbReference>
<dbReference type="HOGENOM" id="CLU_034247_2_0_5"/>
<dbReference type="OrthoDB" id="9804217at2"/>
<dbReference type="UniPathway" id="UPA00035">
    <property type="reaction ID" value="UER00043"/>
</dbReference>
<dbReference type="GO" id="GO:0004425">
    <property type="term" value="F:indole-3-glycerol-phosphate synthase activity"/>
    <property type="evidence" value="ECO:0007669"/>
    <property type="project" value="UniProtKB-UniRule"/>
</dbReference>
<dbReference type="GO" id="GO:0004640">
    <property type="term" value="F:phosphoribosylanthranilate isomerase activity"/>
    <property type="evidence" value="ECO:0007669"/>
    <property type="project" value="TreeGrafter"/>
</dbReference>
<dbReference type="GO" id="GO:0000162">
    <property type="term" value="P:L-tryptophan biosynthetic process"/>
    <property type="evidence" value="ECO:0007669"/>
    <property type="project" value="UniProtKB-UniRule"/>
</dbReference>
<dbReference type="CDD" id="cd00331">
    <property type="entry name" value="IGPS"/>
    <property type="match status" value="1"/>
</dbReference>
<dbReference type="FunFam" id="3.20.20.70:FF:000024">
    <property type="entry name" value="Indole-3-glycerol phosphate synthase"/>
    <property type="match status" value="1"/>
</dbReference>
<dbReference type="Gene3D" id="3.20.20.70">
    <property type="entry name" value="Aldolase class I"/>
    <property type="match status" value="1"/>
</dbReference>
<dbReference type="HAMAP" id="MF_00134_B">
    <property type="entry name" value="IGPS_B"/>
    <property type="match status" value="1"/>
</dbReference>
<dbReference type="InterPro" id="IPR013785">
    <property type="entry name" value="Aldolase_TIM"/>
</dbReference>
<dbReference type="InterPro" id="IPR045186">
    <property type="entry name" value="Indole-3-glycerol_P_synth"/>
</dbReference>
<dbReference type="InterPro" id="IPR013798">
    <property type="entry name" value="Indole-3-glycerol_P_synth_dom"/>
</dbReference>
<dbReference type="InterPro" id="IPR001468">
    <property type="entry name" value="Indole-3-GlycerolPSynthase_CS"/>
</dbReference>
<dbReference type="InterPro" id="IPR011060">
    <property type="entry name" value="RibuloseP-bd_barrel"/>
</dbReference>
<dbReference type="NCBIfam" id="NF001370">
    <property type="entry name" value="PRK00278.1-2"/>
    <property type="match status" value="1"/>
</dbReference>
<dbReference type="NCBIfam" id="NF001373">
    <property type="entry name" value="PRK00278.1-6"/>
    <property type="match status" value="1"/>
</dbReference>
<dbReference type="NCBIfam" id="NF001377">
    <property type="entry name" value="PRK00278.2-4"/>
    <property type="match status" value="1"/>
</dbReference>
<dbReference type="PANTHER" id="PTHR22854:SF2">
    <property type="entry name" value="INDOLE-3-GLYCEROL-PHOSPHATE SYNTHASE"/>
    <property type="match status" value="1"/>
</dbReference>
<dbReference type="PANTHER" id="PTHR22854">
    <property type="entry name" value="TRYPTOPHAN BIOSYNTHESIS PROTEIN"/>
    <property type="match status" value="1"/>
</dbReference>
<dbReference type="Pfam" id="PF00218">
    <property type="entry name" value="IGPS"/>
    <property type="match status" value="1"/>
</dbReference>
<dbReference type="SUPFAM" id="SSF51366">
    <property type="entry name" value="Ribulose-phoshate binding barrel"/>
    <property type="match status" value="1"/>
</dbReference>
<dbReference type="PROSITE" id="PS00614">
    <property type="entry name" value="IGPS"/>
    <property type="match status" value="1"/>
</dbReference>